<comment type="function">
    <text evidence="1">Involved in pyrimidine catabolism. May facilitate the hydrolysis of carbamate, a reaction that can also occur spontaneously.</text>
</comment>
<comment type="catalytic activity">
    <reaction evidence="1">
        <text>carbamate + 2 H(+) = NH4(+) + CO2</text>
        <dbReference type="Rhea" id="RHEA:15649"/>
        <dbReference type="ChEBI" id="CHEBI:13941"/>
        <dbReference type="ChEBI" id="CHEBI:15378"/>
        <dbReference type="ChEBI" id="CHEBI:16526"/>
        <dbReference type="ChEBI" id="CHEBI:28938"/>
    </reaction>
</comment>
<comment type="similarity">
    <text evidence="1">Belongs to the AB hydrolase superfamily. Hydrolase RutD family.</text>
</comment>
<keyword id="KW-0378">Hydrolase</keyword>
<keyword id="KW-1185">Reference proteome</keyword>
<gene>
    <name evidence="1" type="primary">rutD</name>
    <name type="ordered locus">CC_2797</name>
</gene>
<sequence>MRRMTIGTVDGLHYELHGGPIAGREVVLLSSGLGGSGAFWAPQMQALTQRWPVVTYDHRGTGRSVRELPPRYTLAHMADDMVKVMDALGLAKAHVVGHAAGGNAGLQLALDHPDRLAKLVVVNGWSRPDPHIRRCFDTRLHLLNDTGPEAYVHAQPIFLYPADWISRNHTRLMAEEAHHVAAFPPREVMLARINALLAFDIDARLEDITHRVLISASADDMLVPMSCSQRLAGRLPNADFQQVAWGGHGFTVTDPETFNEALVSFLEGA</sequence>
<reference key="1">
    <citation type="journal article" date="2001" name="Proc. Natl. Acad. Sci. U.S.A.">
        <title>Complete genome sequence of Caulobacter crescentus.</title>
        <authorList>
            <person name="Nierman W.C."/>
            <person name="Feldblyum T.V."/>
            <person name="Laub M.T."/>
            <person name="Paulsen I.T."/>
            <person name="Nelson K.E."/>
            <person name="Eisen J.A."/>
            <person name="Heidelberg J.F."/>
            <person name="Alley M.R.K."/>
            <person name="Ohta N."/>
            <person name="Maddock J.R."/>
            <person name="Potocka I."/>
            <person name="Nelson W.C."/>
            <person name="Newton A."/>
            <person name="Stephens C."/>
            <person name="Phadke N.D."/>
            <person name="Ely B."/>
            <person name="DeBoy R.T."/>
            <person name="Dodson R.J."/>
            <person name="Durkin A.S."/>
            <person name="Gwinn M.L."/>
            <person name="Haft D.H."/>
            <person name="Kolonay J.F."/>
            <person name="Smit J."/>
            <person name="Craven M.B."/>
            <person name="Khouri H.M."/>
            <person name="Shetty J."/>
            <person name="Berry K.J."/>
            <person name="Utterback T.R."/>
            <person name="Tran K."/>
            <person name="Wolf A.M."/>
            <person name="Vamathevan J.J."/>
            <person name="Ermolaeva M.D."/>
            <person name="White O."/>
            <person name="Salzberg S.L."/>
            <person name="Venter J.C."/>
            <person name="Shapiro L."/>
            <person name="Fraser C.M."/>
        </authorList>
    </citation>
    <scope>NUCLEOTIDE SEQUENCE [LARGE SCALE GENOMIC DNA]</scope>
    <source>
        <strain>ATCC 19089 / CIP 103742 / CB 15</strain>
    </source>
</reference>
<name>RUTD_CAUVC</name>
<proteinExistence type="inferred from homology"/>
<accession>Q9A4N3</accession>
<protein>
    <recommendedName>
        <fullName evidence="1">Putative carbamate hydrolase RutD</fullName>
        <ecNumber evidence="1">3.5.1.-</ecNumber>
    </recommendedName>
    <alternativeName>
        <fullName evidence="1">Aminohydrolase</fullName>
    </alternativeName>
</protein>
<evidence type="ECO:0000255" key="1">
    <source>
        <dbReference type="HAMAP-Rule" id="MF_00832"/>
    </source>
</evidence>
<feature type="chain" id="PRO_0000402928" description="Putative carbamate hydrolase RutD">
    <location>
        <begin position="1"/>
        <end position="269"/>
    </location>
</feature>
<feature type="domain" description="AB hydrolase-1" evidence="1">
    <location>
        <begin position="26"/>
        <end position="144"/>
    </location>
</feature>
<dbReference type="EC" id="3.5.1.-" evidence="1"/>
<dbReference type="EMBL" id="AE005673">
    <property type="protein sequence ID" value="AAK24761.1"/>
    <property type="molecule type" value="Genomic_DNA"/>
</dbReference>
<dbReference type="PIR" id="E87595">
    <property type="entry name" value="E87595"/>
</dbReference>
<dbReference type="RefSeq" id="NP_421593.1">
    <property type="nucleotide sequence ID" value="NC_002696.2"/>
</dbReference>
<dbReference type="RefSeq" id="WP_010920638.1">
    <property type="nucleotide sequence ID" value="NC_002696.2"/>
</dbReference>
<dbReference type="SMR" id="Q9A4N3"/>
<dbReference type="STRING" id="190650.CC_2797"/>
<dbReference type="ESTHER" id="caucr-CC2797">
    <property type="family name" value="RutD"/>
</dbReference>
<dbReference type="EnsemblBacteria" id="AAK24761">
    <property type="protein sequence ID" value="AAK24761"/>
    <property type="gene ID" value="CC_2797"/>
</dbReference>
<dbReference type="KEGG" id="ccr:CC_2797"/>
<dbReference type="PATRIC" id="fig|190650.5.peg.2799"/>
<dbReference type="eggNOG" id="COG2021">
    <property type="taxonomic scope" value="Bacteria"/>
</dbReference>
<dbReference type="HOGENOM" id="CLU_020336_50_1_5"/>
<dbReference type="BioCyc" id="CAULO:CC2797-MONOMER"/>
<dbReference type="Proteomes" id="UP000001816">
    <property type="component" value="Chromosome"/>
</dbReference>
<dbReference type="GO" id="GO:0016811">
    <property type="term" value="F:hydrolase activity, acting on carbon-nitrogen (but not peptide) bonds, in linear amides"/>
    <property type="evidence" value="ECO:0007669"/>
    <property type="project" value="InterPro"/>
</dbReference>
<dbReference type="GO" id="GO:0019740">
    <property type="term" value="P:nitrogen utilization"/>
    <property type="evidence" value="ECO:0007669"/>
    <property type="project" value="UniProtKB-UniRule"/>
</dbReference>
<dbReference type="GO" id="GO:0006212">
    <property type="term" value="P:uracil catabolic process"/>
    <property type="evidence" value="ECO:0007669"/>
    <property type="project" value="UniProtKB-UniRule"/>
</dbReference>
<dbReference type="Gene3D" id="3.40.50.1820">
    <property type="entry name" value="alpha/beta hydrolase"/>
    <property type="match status" value="1"/>
</dbReference>
<dbReference type="HAMAP" id="MF_00832">
    <property type="entry name" value="RutD"/>
    <property type="match status" value="1"/>
</dbReference>
<dbReference type="InterPro" id="IPR050471">
    <property type="entry name" value="AB_hydrolase"/>
</dbReference>
<dbReference type="InterPro" id="IPR000073">
    <property type="entry name" value="AB_hydrolase_1"/>
</dbReference>
<dbReference type="InterPro" id="IPR029058">
    <property type="entry name" value="AB_hydrolase_fold"/>
</dbReference>
<dbReference type="InterPro" id="IPR019913">
    <property type="entry name" value="Pyrimidine_utilisation_RutD"/>
</dbReference>
<dbReference type="NCBIfam" id="TIGR03611">
    <property type="entry name" value="RutD"/>
    <property type="match status" value="1"/>
</dbReference>
<dbReference type="PANTHER" id="PTHR43433:SF5">
    <property type="entry name" value="AB HYDROLASE-1 DOMAIN-CONTAINING PROTEIN"/>
    <property type="match status" value="1"/>
</dbReference>
<dbReference type="PANTHER" id="PTHR43433">
    <property type="entry name" value="HYDROLASE, ALPHA/BETA FOLD FAMILY PROTEIN"/>
    <property type="match status" value="1"/>
</dbReference>
<dbReference type="Pfam" id="PF00561">
    <property type="entry name" value="Abhydrolase_1"/>
    <property type="match status" value="1"/>
</dbReference>
<dbReference type="PRINTS" id="PR00111">
    <property type="entry name" value="ABHYDROLASE"/>
</dbReference>
<dbReference type="SUPFAM" id="SSF53474">
    <property type="entry name" value="alpha/beta-Hydrolases"/>
    <property type="match status" value="1"/>
</dbReference>
<organism>
    <name type="scientific">Caulobacter vibrioides (strain ATCC 19089 / CIP 103742 / CB 15)</name>
    <name type="common">Caulobacter crescentus</name>
    <dbReference type="NCBI Taxonomy" id="190650"/>
    <lineage>
        <taxon>Bacteria</taxon>
        <taxon>Pseudomonadati</taxon>
        <taxon>Pseudomonadota</taxon>
        <taxon>Alphaproteobacteria</taxon>
        <taxon>Caulobacterales</taxon>
        <taxon>Caulobacteraceae</taxon>
        <taxon>Caulobacter</taxon>
    </lineage>
</organism>